<accession>Q8ZGC4</accession>
<accession>Q0WH36</accession>
<keyword id="KW-0030">Aminoacyl-tRNA synthetase</keyword>
<keyword id="KW-0067">ATP-binding</keyword>
<keyword id="KW-0963">Cytoplasm</keyword>
<keyword id="KW-0436">Ligase</keyword>
<keyword id="KW-0547">Nucleotide-binding</keyword>
<keyword id="KW-0648">Protein biosynthesis</keyword>
<keyword id="KW-1185">Reference proteome</keyword>
<proteinExistence type="inferred from homology"/>
<protein>
    <recommendedName>
        <fullName evidence="1">Serine--tRNA ligase</fullName>
        <ecNumber evidence="1">6.1.1.11</ecNumber>
    </recommendedName>
    <alternativeName>
        <fullName evidence="1">Seryl-tRNA synthetase</fullName>
        <shortName evidence="1">SerRS</shortName>
    </alternativeName>
    <alternativeName>
        <fullName evidence="1">Seryl-tRNA(Ser/Sec) synthetase</fullName>
    </alternativeName>
</protein>
<name>SYS_YERPE</name>
<comment type="function">
    <text evidence="1">Catalyzes the attachment of serine to tRNA(Ser). Is also able to aminoacylate tRNA(Sec) with serine, to form the misacylated tRNA L-seryl-tRNA(Sec), which will be further converted into selenocysteinyl-tRNA(Sec).</text>
</comment>
<comment type="catalytic activity">
    <reaction evidence="1">
        <text>tRNA(Ser) + L-serine + ATP = L-seryl-tRNA(Ser) + AMP + diphosphate + H(+)</text>
        <dbReference type="Rhea" id="RHEA:12292"/>
        <dbReference type="Rhea" id="RHEA-COMP:9669"/>
        <dbReference type="Rhea" id="RHEA-COMP:9703"/>
        <dbReference type="ChEBI" id="CHEBI:15378"/>
        <dbReference type="ChEBI" id="CHEBI:30616"/>
        <dbReference type="ChEBI" id="CHEBI:33019"/>
        <dbReference type="ChEBI" id="CHEBI:33384"/>
        <dbReference type="ChEBI" id="CHEBI:78442"/>
        <dbReference type="ChEBI" id="CHEBI:78533"/>
        <dbReference type="ChEBI" id="CHEBI:456215"/>
        <dbReference type="EC" id="6.1.1.11"/>
    </reaction>
</comment>
<comment type="catalytic activity">
    <reaction evidence="1">
        <text>tRNA(Sec) + L-serine + ATP = L-seryl-tRNA(Sec) + AMP + diphosphate + H(+)</text>
        <dbReference type="Rhea" id="RHEA:42580"/>
        <dbReference type="Rhea" id="RHEA-COMP:9742"/>
        <dbReference type="Rhea" id="RHEA-COMP:10128"/>
        <dbReference type="ChEBI" id="CHEBI:15378"/>
        <dbReference type="ChEBI" id="CHEBI:30616"/>
        <dbReference type="ChEBI" id="CHEBI:33019"/>
        <dbReference type="ChEBI" id="CHEBI:33384"/>
        <dbReference type="ChEBI" id="CHEBI:78442"/>
        <dbReference type="ChEBI" id="CHEBI:78533"/>
        <dbReference type="ChEBI" id="CHEBI:456215"/>
        <dbReference type="EC" id="6.1.1.11"/>
    </reaction>
</comment>
<comment type="pathway">
    <text evidence="1">Aminoacyl-tRNA biosynthesis; selenocysteinyl-tRNA(Sec) biosynthesis; L-seryl-tRNA(Sec) from L-serine and tRNA(Sec): step 1/1.</text>
</comment>
<comment type="subunit">
    <text evidence="1">Homodimer. The tRNA molecule binds across the dimer.</text>
</comment>
<comment type="subcellular location">
    <subcellularLocation>
        <location evidence="1">Cytoplasm</location>
    </subcellularLocation>
</comment>
<comment type="domain">
    <text evidence="1">Consists of two distinct domains, a catalytic core and a N-terminal extension that is involved in tRNA binding.</text>
</comment>
<comment type="similarity">
    <text evidence="1">Belongs to the class-II aminoacyl-tRNA synthetase family. Type-1 seryl-tRNA synthetase subfamily.</text>
</comment>
<reference key="1">
    <citation type="journal article" date="2001" name="Nature">
        <title>Genome sequence of Yersinia pestis, the causative agent of plague.</title>
        <authorList>
            <person name="Parkhill J."/>
            <person name="Wren B.W."/>
            <person name="Thomson N.R."/>
            <person name="Titball R.W."/>
            <person name="Holden M.T.G."/>
            <person name="Prentice M.B."/>
            <person name="Sebaihia M."/>
            <person name="James K.D."/>
            <person name="Churcher C.M."/>
            <person name="Mungall K.L."/>
            <person name="Baker S."/>
            <person name="Basham D."/>
            <person name="Bentley S.D."/>
            <person name="Brooks K."/>
            <person name="Cerdeno-Tarraga A.-M."/>
            <person name="Chillingworth T."/>
            <person name="Cronin A."/>
            <person name="Davies R.M."/>
            <person name="Davis P."/>
            <person name="Dougan G."/>
            <person name="Feltwell T."/>
            <person name="Hamlin N."/>
            <person name="Holroyd S."/>
            <person name="Jagels K."/>
            <person name="Karlyshev A.V."/>
            <person name="Leather S."/>
            <person name="Moule S."/>
            <person name="Oyston P.C.F."/>
            <person name="Quail M.A."/>
            <person name="Rutherford K.M."/>
            <person name="Simmonds M."/>
            <person name="Skelton J."/>
            <person name="Stevens K."/>
            <person name="Whitehead S."/>
            <person name="Barrell B.G."/>
        </authorList>
    </citation>
    <scope>NUCLEOTIDE SEQUENCE [LARGE SCALE GENOMIC DNA]</scope>
    <source>
        <strain>CO-92 / Biovar Orientalis</strain>
    </source>
</reference>
<reference key="2">
    <citation type="journal article" date="2002" name="J. Bacteriol.">
        <title>Genome sequence of Yersinia pestis KIM.</title>
        <authorList>
            <person name="Deng W."/>
            <person name="Burland V."/>
            <person name="Plunkett G. III"/>
            <person name="Boutin A."/>
            <person name="Mayhew G.F."/>
            <person name="Liss P."/>
            <person name="Perna N.T."/>
            <person name="Rose D.J."/>
            <person name="Mau B."/>
            <person name="Zhou S."/>
            <person name="Schwartz D.C."/>
            <person name="Fetherston J.D."/>
            <person name="Lindler L.E."/>
            <person name="Brubaker R.R."/>
            <person name="Plano G.V."/>
            <person name="Straley S.C."/>
            <person name="McDonough K.A."/>
            <person name="Nilles M.L."/>
            <person name="Matson J.S."/>
            <person name="Blattner F.R."/>
            <person name="Perry R.D."/>
        </authorList>
    </citation>
    <scope>NUCLEOTIDE SEQUENCE [LARGE SCALE GENOMIC DNA]</scope>
    <source>
        <strain>KIM10+ / Biovar Mediaevalis</strain>
    </source>
</reference>
<reference key="3">
    <citation type="journal article" date="2004" name="DNA Res.">
        <title>Complete genome sequence of Yersinia pestis strain 91001, an isolate avirulent to humans.</title>
        <authorList>
            <person name="Song Y."/>
            <person name="Tong Z."/>
            <person name="Wang J."/>
            <person name="Wang L."/>
            <person name="Guo Z."/>
            <person name="Han Y."/>
            <person name="Zhang J."/>
            <person name="Pei D."/>
            <person name="Zhou D."/>
            <person name="Qin H."/>
            <person name="Pang X."/>
            <person name="Han Y."/>
            <person name="Zhai J."/>
            <person name="Li M."/>
            <person name="Cui B."/>
            <person name="Qi Z."/>
            <person name="Jin L."/>
            <person name="Dai R."/>
            <person name="Chen F."/>
            <person name="Li S."/>
            <person name="Ye C."/>
            <person name="Du Z."/>
            <person name="Lin W."/>
            <person name="Wang J."/>
            <person name="Yu J."/>
            <person name="Yang H."/>
            <person name="Wang J."/>
            <person name="Huang P."/>
            <person name="Yang R."/>
        </authorList>
    </citation>
    <scope>NUCLEOTIDE SEQUENCE [LARGE SCALE GENOMIC DNA]</scope>
    <source>
        <strain>91001 / Biovar Mediaevalis</strain>
    </source>
</reference>
<gene>
    <name evidence="1" type="primary">serS</name>
    <name type="ordered locus">YPO1379</name>
    <name type="ordered locus">y2796</name>
    <name type="ordered locus">YP_1214</name>
</gene>
<evidence type="ECO:0000255" key="1">
    <source>
        <dbReference type="HAMAP-Rule" id="MF_00176"/>
    </source>
</evidence>
<dbReference type="EC" id="6.1.1.11" evidence="1"/>
<dbReference type="EMBL" id="AL590842">
    <property type="protein sequence ID" value="CAL20031.1"/>
    <property type="molecule type" value="Genomic_DNA"/>
</dbReference>
<dbReference type="EMBL" id="AE009952">
    <property type="protein sequence ID" value="AAM86347.1"/>
    <property type="molecule type" value="Genomic_DNA"/>
</dbReference>
<dbReference type="EMBL" id="AE017042">
    <property type="protein sequence ID" value="AAS61457.1"/>
    <property type="molecule type" value="Genomic_DNA"/>
</dbReference>
<dbReference type="PIR" id="AE0168">
    <property type="entry name" value="AE0168"/>
</dbReference>
<dbReference type="RefSeq" id="WP_002211336.1">
    <property type="nucleotide sequence ID" value="NZ_WUCM01000096.1"/>
</dbReference>
<dbReference type="RefSeq" id="YP_002346402.1">
    <property type="nucleotide sequence ID" value="NC_003143.1"/>
</dbReference>
<dbReference type="SMR" id="Q8ZGC4"/>
<dbReference type="IntAct" id="Q8ZGC4">
    <property type="interactions" value="1"/>
</dbReference>
<dbReference type="STRING" id="214092.YPO1379"/>
<dbReference type="PaxDb" id="214092-YPO1379"/>
<dbReference type="DNASU" id="1147743"/>
<dbReference type="EnsemblBacteria" id="AAS61457">
    <property type="protein sequence ID" value="AAS61457"/>
    <property type="gene ID" value="YP_1214"/>
</dbReference>
<dbReference type="GeneID" id="57977175"/>
<dbReference type="KEGG" id="ype:YPO1379"/>
<dbReference type="KEGG" id="ypk:y2796"/>
<dbReference type="KEGG" id="ypm:YP_1214"/>
<dbReference type="PATRIC" id="fig|214092.21.peg.1702"/>
<dbReference type="eggNOG" id="COG0172">
    <property type="taxonomic scope" value="Bacteria"/>
</dbReference>
<dbReference type="HOGENOM" id="CLU_023797_1_1_6"/>
<dbReference type="OMA" id="GYTPCFR"/>
<dbReference type="OrthoDB" id="9804647at2"/>
<dbReference type="UniPathway" id="UPA00906">
    <property type="reaction ID" value="UER00895"/>
</dbReference>
<dbReference type="Proteomes" id="UP000000815">
    <property type="component" value="Chromosome"/>
</dbReference>
<dbReference type="Proteomes" id="UP000001019">
    <property type="component" value="Chromosome"/>
</dbReference>
<dbReference type="Proteomes" id="UP000002490">
    <property type="component" value="Chromosome"/>
</dbReference>
<dbReference type="GO" id="GO:0005737">
    <property type="term" value="C:cytoplasm"/>
    <property type="evidence" value="ECO:0007669"/>
    <property type="project" value="UniProtKB-SubCell"/>
</dbReference>
<dbReference type="GO" id="GO:0005524">
    <property type="term" value="F:ATP binding"/>
    <property type="evidence" value="ECO:0007669"/>
    <property type="project" value="UniProtKB-UniRule"/>
</dbReference>
<dbReference type="GO" id="GO:0004828">
    <property type="term" value="F:serine-tRNA ligase activity"/>
    <property type="evidence" value="ECO:0007669"/>
    <property type="project" value="UniProtKB-UniRule"/>
</dbReference>
<dbReference type="GO" id="GO:0016260">
    <property type="term" value="P:selenocysteine biosynthetic process"/>
    <property type="evidence" value="ECO:0007669"/>
    <property type="project" value="UniProtKB-UniRule"/>
</dbReference>
<dbReference type="GO" id="GO:0006434">
    <property type="term" value="P:seryl-tRNA aminoacylation"/>
    <property type="evidence" value="ECO:0007669"/>
    <property type="project" value="UniProtKB-UniRule"/>
</dbReference>
<dbReference type="CDD" id="cd00770">
    <property type="entry name" value="SerRS_core"/>
    <property type="match status" value="1"/>
</dbReference>
<dbReference type="FunFam" id="1.10.287.40:FF:000001">
    <property type="entry name" value="Serine--tRNA ligase"/>
    <property type="match status" value="1"/>
</dbReference>
<dbReference type="FunFam" id="3.30.930.10:FF:000018">
    <property type="entry name" value="Serine--tRNA ligase"/>
    <property type="match status" value="1"/>
</dbReference>
<dbReference type="Gene3D" id="3.30.930.10">
    <property type="entry name" value="Bira Bifunctional Protein, Domain 2"/>
    <property type="match status" value="1"/>
</dbReference>
<dbReference type="Gene3D" id="1.10.287.40">
    <property type="entry name" value="Serine-tRNA synthetase, tRNA binding domain"/>
    <property type="match status" value="1"/>
</dbReference>
<dbReference type="HAMAP" id="MF_00176">
    <property type="entry name" value="Ser_tRNA_synth_type1"/>
    <property type="match status" value="1"/>
</dbReference>
<dbReference type="InterPro" id="IPR002314">
    <property type="entry name" value="aa-tRNA-synt_IIb"/>
</dbReference>
<dbReference type="InterPro" id="IPR006195">
    <property type="entry name" value="aa-tRNA-synth_II"/>
</dbReference>
<dbReference type="InterPro" id="IPR045864">
    <property type="entry name" value="aa-tRNA-synth_II/BPL/LPL"/>
</dbReference>
<dbReference type="InterPro" id="IPR002317">
    <property type="entry name" value="Ser-tRNA-ligase_type_1"/>
</dbReference>
<dbReference type="InterPro" id="IPR015866">
    <property type="entry name" value="Ser-tRNA-synth_1_N"/>
</dbReference>
<dbReference type="InterPro" id="IPR042103">
    <property type="entry name" value="SerRS_1_N_sf"/>
</dbReference>
<dbReference type="InterPro" id="IPR033729">
    <property type="entry name" value="SerRS_core"/>
</dbReference>
<dbReference type="InterPro" id="IPR010978">
    <property type="entry name" value="tRNA-bd_arm"/>
</dbReference>
<dbReference type="NCBIfam" id="TIGR00414">
    <property type="entry name" value="serS"/>
    <property type="match status" value="1"/>
</dbReference>
<dbReference type="PANTHER" id="PTHR43697:SF1">
    <property type="entry name" value="SERINE--TRNA LIGASE"/>
    <property type="match status" value="1"/>
</dbReference>
<dbReference type="PANTHER" id="PTHR43697">
    <property type="entry name" value="SERYL-TRNA SYNTHETASE"/>
    <property type="match status" value="1"/>
</dbReference>
<dbReference type="Pfam" id="PF02403">
    <property type="entry name" value="Seryl_tRNA_N"/>
    <property type="match status" value="1"/>
</dbReference>
<dbReference type="Pfam" id="PF00587">
    <property type="entry name" value="tRNA-synt_2b"/>
    <property type="match status" value="1"/>
</dbReference>
<dbReference type="PIRSF" id="PIRSF001529">
    <property type="entry name" value="Ser-tRNA-synth_IIa"/>
    <property type="match status" value="1"/>
</dbReference>
<dbReference type="PRINTS" id="PR00981">
    <property type="entry name" value="TRNASYNTHSER"/>
</dbReference>
<dbReference type="SUPFAM" id="SSF55681">
    <property type="entry name" value="Class II aaRS and biotin synthetases"/>
    <property type="match status" value="1"/>
</dbReference>
<dbReference type="SUPFAM" id="SSF46589">
    <property type="entry name" value="tRNA-binding arm"/>
    <property type="match status" value="1"/>
</dbReference>
<dbReference type="PROSITE" id="PS50862">
    <property type="entry name" value="AA_TRNA_LIGASE_II"/>
    <property type="match status" value="1"/>
</dbReference>
<sequence length="430" mass="48569">MLDPNMLRNELDAVAEKLARRGFKLDVEVLRQQEERRKVLQVETESLQAERNSRSKQIGAAKARGEDIEPLRLEVNALGEKLDAAKAELDKLQNEIRDLALSIPNLPDDSVPVGKNENDNIEVSRWGEPRKYDFDVKDHVSLGEMAGGLDFAAAVKLTGARFVVMKGQIARMHRALSQFMLDLHTEKHGYLEAYVPYLVNHATLYGTGQLPKFGEDLFHTKPLAEESDNSNYALIPTAEVPLTNLVRDEILEEDSLPLKLTAHTPCFRSEAGSYGRDTRGLIRMHQFDKVEMVQITRPEDSMAALEELTGHAEKVLQLLELPYRKVLLCTGDMGFGSSKTYDLEVWLPAQDTYREISSCSNMWDFQARRMQARYRNKTDRKTRLVHTLNGSGLAVGRTLVAVLENYQQADGRIQVPDVLRPYMGGLEYIG</sequence>
<organism>
    <name type="scientific">Yersinia pestis</name>
    <dbReference type="NCBI Taxonomy" id="632"/>
    <lineage>
        <taxon>Bacteria</taxon>
        <taxon>Pseudomonadati</taxon>
        <taxon>Pseudomonadota</taxon>
        <taxon>Gammaproteobacteria</taxon>
        <taxon>Enterobacterales</taxon>
        <taxon>Yersiniaceae</taxon>
        <taxon>Yersinia</taxon>
    </lineage>
</organism>
<feature type="chain" id="PRO_0000122166" description="Serine--tRNA ligase">
    <location>
        <begin position="1"/>
        <end position="430"/>
    </location>
</feature>
<feature type="binding site" evidence="1">
    <location>
        <begin position="237"/>
        <end position="239"/>
    </location>
    <ligand>
        <name>L-serine</name>
        <dbReference type="ChEBI" id="CHEBI:33384"/>
    </ligand>
</feature>
<feature type="binding site" evidence="1">
    <location>
        <begin position="268"/>
        <end position="270"/>
    </location>
    <ligand>
        <name>ATP</name>
        <dbReference type="ChEBI" id="CHEBI:30616"/>
    </ligand>
</feature>
<feature type="binding site" evidence="1">
    <location>
        <position position="291"/>
    </location>
    <ligand>
        <name>L-serine</name>
        <dbReference type="ChEBI" id="CHEBI:33384"/>
    </ligand>
</feature>
<feature type="binding site" evidence="1">
    <location>
        <begin position="355"/>
        <end position="358"/>
    </location>
    <ligand>
        <name>ATP</name>
        <dbReference type="ChEBI" id="CHEBI:30616"/>
    </ligand>
</feature>
<feature type="binding site" evidence="1">
    <location>
        <position position="391"/>
    </location>
    <ligand>
        <name>L-serine</name>
        <dbReference type="ChEBI" id="CHEBI:33384"/>
    </ligand>
</feature>